<dbReference type="EMBL" id="CP000946">
    <property type="protein sequence ID" value="ACA77783.1"/>
    <property type="molecule type" value="Genomic_DNA"/>
</dbReference>
<dbReference type="RefSeq" id="WP_001222721.1">
    <property type="nucleotide sequence ID" value="NZ_MTFT01000006.1"/>
</dbReference>
<dbReference type="GeneID" id="75202157"/>
<dbReference type="KEGG" id="ecl:EcolC_2143"/>
<dbReference type="HOGENOM" id="CLU_028880_0_0_6"/>
<dbReference type="GO" id="GO:0005886">
    <property type="term" value="C:plasma membrane"/>
    <property type="evidence" value="ECO:0007669"/>
    <property type="project" value="UniProtKB-SubCell"/>
</dbReference>
<dbReference type="GO" id="GO:0022857">
    <property type="term" value="F:transmembrane transporter activity"/>
    <property type="evidence" value="ECO:0007669"/>
    <property type="project" value="InterPro"/>
</dbReference>
<dbReference type="CDD" id="cd06579">
    <property type="entry name" value="TM_PBP1_transp_AraH_like"/>
    <property type="match status" value="1"/>
</dbReference>
<dbReference type="InterPro" id="IPR001851">
    <property type="entry name" value="ABC_transp_permease"/>
</dbReference>
<dbReference type="NCBIfam" id="NF011612">
    <property type="entry name" value="PRK15038.1"/>
    <property type="match status" value="1"/>
</dbReference>
<dbReference type="PANTHER" id="PTHR32196">
    <property type="entry name" value="ABC TRANSPORTER PERMEASE PROTEIN YPHD-RELATED-RELATED"/>
    <property type="match status" value="1"/>
</dbReference>
<dbReference type="PANTHER" id="PTHR32196:SF71">
    <property type="entry name" value="AUTOINDUCER 2 IMPORT SYSTEM PERMEASE PROTEIN LSRD"/>
    <property type="match status" value="1"/>
</dbReference>
<dbReference type="Pfam" id="PF02653">
    <property type="entry name" value="BPD_transp_2"/>
    <property type="match status" value="1"/>
</dbReference>
<evidence type="ECO:0000250" key="1"/>
<evidence type="ECO:0000255" key="2"/>
<evidence type="ECO:0000305" key="3"/>
<gene>
    <name type="primary">lsrD</name>
    <name type="ordered locus">EcolC_2143</name>
</gene>
<reference key="1">
    <citation type="submission" date="2008-02" db="EMBL/GenBank/DDBJ databases">
        <title>Complete sequence of Escherichia coli C str. ATCC 8739.</title>
        <authorList>
            <person name="Copeland A."/>
            <person name="Lucas S."/>
            <person name="Lapidus A."/>
            <person name="Glavina del Rio T."/>
            <person name="Dalin E."/>
            <person name="Tice H."/>
            <person name="Bruce D."/>
            <person name="Goodwin L."/>
            <person name="Pitluck S."/>
            <person name="Kiss H."/>
            <person name="Brettin T."/>
            <person name="Detter J.C."/>
            <person name="Han C."/>
            <person name="Kuske C.R."/>
            <person name="Schmutz J."/>
            <person name="Larimer F."/>
            <person name="Land M."/>
            <person name="Hauser L."/>
            <person name="Kyrpides N."/>
            <person name="Mikhailova N."/>
            <person name="Ingram L."/>
            <person name="Richardson P."/>
        </authorList>
    </citation>
    <scope>NUCLEOTIDE SEQUENCE [LARGE SCALE GENOMIC DNA]</scope>
    <source>
        <strain>ATCC 8739 / DSM 1576 / NBRC 3972 / NCIMB 8545 / WDCM 00012 / Crooks</strain>
    </source>
</reference>
<organism>
    <name type="scientific">Escherichia coli (strain ATCC 8739 / DSM 1576 / NBRC 3972 / NCIMB 8545 / WDCM 00012 / Crooks)</name>
    <dbReference type="NCBI Taxonomy" id="481805"/>
    <lineage>
        <taxon>Bacteria</taxon>
        <taxon>Pseudomonadati</taxon>
        <taxon>Pseudomonadota</taxon>
        <taxon>Gammaproteobacteria</taxon>
        <taxon>Enterobacterales</taxon>
        <taxon>Enterobacteriaceae</taxon>
        <taxon>Escherichia</taxon>
    </lineage>
</organism>
<keyword id="KW-0997">Cell inner membrane</keyword>
<keyword id="KW-1003">Cell membrane</keyword>
<keyword id="KW-0472">Membrane</keyword>
<keyword id="KW-0812">Transmembrane</keyword>
<keyword id="KW-1133">Transmembrane helix</keyword>
<keyword id="KW-0813">Transport</keyword>
<feature type="chain" id="PRO_0000351364" description="Autoinducer 2 import system permease protein LsrD">
    <location>
        <begin position="1"/>
        <end position="330"/>
    </location>
</feature>
<feature type="topological domain" description="Cytoplasmic" evidence="2">
    <location>
        <begin position="1"/>
        <end position="4"/>
    </location>
</feature>
<feature type="transmembrane region" description="Helical" evidence="2">
    <location>
        <begin position="5"/>
        <end position="25"/>
    </location>
</feature>
<feature type="topological domain" description="Periplasmic" evidence="2">
    <location>
        <begin position="26"/>
        <end position="42"/>
    </location>
</feature>
<feature type="transmembrane region" description="Helical" evidence="2">
    <location>
        <begin position="43"/>
        <end position="63"/>
    </location>
</feature>
<feature type="topological domain" description="Cytoplasmic" evidence="2">
    <location>
        <begin position="64"/>
        <end position="67"/>
    </location>
</feature>
<feature type="transmembrane region" description="Helical" evidence="2">
    <location>
        <begin position="68"/>
        <end position="88"/>
    </location>
</feature>
<feature type="transmembrane region" description="Helical" evidence="2">
    <location>
        <begin position="89"/>
        <end position="109"/>
    </location>
</feature>
<feature type="topological domain" description="Cytoplasmic" evidence="2">
    <location>
        <begin position="110"/>
        <end position="115"/>
    </location>
</feature>
<feature type="transmembrane region" description="Helical" evidence="2">
    <location>
        <begin position="116"/>
        <end position="136"/>
    </location>
</feature>
<feature type="topological domain" description="Periplasmic" evidence="2">
    <location>
        <begin position="137"/>
        <end position="159"/>
    </location>
</feature>
<feature type="transmembrane region" description="Helical" evidence="2">
    <location>
        <begin position="160"/>
        <end position="180"/>
    </location>
</feature>
<feature type="topological domain" description="Cytoplasmic" evidence="2">
    <location>
        <begin position="181"/>
        <end position="209"/>
    </location>
</feature>
<feature type="transmembrane region" description="Helical" evidence="2">
    <location>
        <begin position="210"/>
        <end position="230"/>
    </location>
</feature>
<feature type="topological domain" description="Periplasmic" evidence="2">
    <location>
        <begin position="231"/>
        <end position="237"/>
    </location>
</feature>
<feature type="transmembrane region" description="Helical" evidence="2">
    <location>
        <begin position="238"/>
        <end position="258"/>
    </location>
</feature>
<feature type="transmembrane region" description="Helical" evidence="2">
    <location>
        <begin position="259"/>
        <end position="279"/>
    </location>
</feature>
<feature type="topological domain" description="Periplasmic" evidence="2">
    <location>
        <begin position="280"/>
        <end position="285"/>
    </location>
</feature>
<feature type="transmembrane region" description="Helical" evidence="2">
    <location>
        <begin position="286"/>
        <end position="306"/>
    </location>
</feature>
<feature type="topological domain" description="Cytoplasmic" evidence="2">
    <location>
        <begin position="307"/>
        <end position="330"/>
    </location>
</feature>
<protein>
    <recommendedName>
        <fullName>Autoinducer 2 import system permease protein LsrD</fullName>
        <shortName>AI-2 import system permease protein LsrD</shortName>
    </recommendedName>
</protein>
<accession>B1IRU5</accession>
<name>LSRD_ECOLC</name>
<comment type="function">
    <text evidence="1">Part of the ABC transporter complex LsrABCD involved in autoinducer 2 (AI-2) import. Probably responsible for the translocation of the substrate across the membrane (By similarity).</text>
</comment>
<comment type="subunit">
    <text evidence="1">The complex is composed of two ATP-binding proteins (LsrA), two transmembrane proteins (LsrC and LsrD) and a solute-binding protein (LsrB).</text>
</comment>
<comment type="subcellular location">
    <subcellularLocation>
        <location evidence="1">Cell inner membrane</location>
        <topology evidence="1">Multi-pass membrane protein</topology>
    </subcellularLocation>
</comment>
<comment type="similarity">
    <text evidence="3">Belongs to the binding-protein-dependent transport system permease family. AraH/RbsC subfamily.</text>
</comment>
<sequence>MRIRYGWELALAALLVIEIVAFGAINPRMLDLNMLLFSTSDFICIGIVALPLTMVIVSGGIDISFGSTIGLCAIALGVLFQSGVPMPLAILLTLLLGALCGLINAGLIIYTKVNPLVITLGTLYLFAGSALLLSGMAGATGYEGIGGFPMAFTDFANLDVLGLPVPLIIFLICLLVFWLWLHKTHAGRNVFLIGQSPRVALYSAIPVNRTLCALYAMTGLASAVAAVLLVSYFGSARSDLGASFLMPAITAVVLGGANIYGGSGSIIGTAIAVLLVGYLQQGLQMAGVPNQVSSALSGALLIVVVVGRSVSLHRQQIKEWLARRANNPLP</sequence>
<proteinExistence type="inferred from homology"/>